<sequence>MKYKLLPCLLAIFLTGCDRTEVTLSFTPEMASFSNEFDFDPLRGPVKDFTQTLMDEQGEVTKRVSGTLSEEGCFDSLELLDLENNTVVALVLDANYYRDAETLEKRVRLQGKCQLAELPSAGVSWETDDNGFVIKASSKQMQMEYRYDDQGYPLGKTTKSNDKTLSVSATPSTDPIKKLDYTAVTLLNNQRVGNVKQSCEYDSHANPVDCQLIIVDEGVKPAVERVYTIKNTIDYY</sequence>
<gene>
    <name type="primary">ynfC</name>
    <name type="ordered locus">b1585</name>
    <name type="ordered locus">JW5258</name>
</gene>
<protein>
    <recommendedName>
        <fullName>UPF0257 lipoprotein YnfC</fullName>
    </recommendedName>
</protein>
<organism>
    <name type="scientific">Escherichia coli (strain K12)</name>
    <dbReference type="NCBI Taxonomy" id="83333"/>
    <lineage>
        <taxon>Bacteria</taxon>
        <taxon>Pseudomonadati</taxon>
        <taxon>Pseudomonadota</taxon>
        <taxon>Gammaproteobacteria</taxon>
        <taxon>Enterobacterales</taxon>
        <taxon>Enterobacteriaceae</taxon>
        <taxon>Escherichia</taxon>
    </lineage>
</organism>
<dbReference type="EMBL" id="U00096">
    <property type="protein sequence ID" value="AAC74657.2"/>
    <property type="molecule type" value="Genomic_DNA"/>
</dbReference>
<dbReference type="EMBL" id="AP009048">
    <property type="protein sequence ID" value="BAE76478.1"/>
    <property type="molecule type" value="Genomic_DNA"/>
</dbReference>
<dbReference type="PIR" id="C64914">
    <property type="entry name" value="C64914"/>
</dbReference>
<dbReference type="RefSeq" id="NP_416102.2">
    <property type="nucleotide sequence ID" value="NC_000913.3"/>
</dbReference>
<dbReference type="RefSeq" id="WP_001321287.1">
    <property type="nucleotide sequence ID" value="NZ_STEB01000003.1"/>
</dbReference>
<dbReference type="SMR" id="P67553"/>
<dbReference type="BioGRID" id="4260235">
    <property type="interactions" value="11"/>
</dbReference>
<dbReference type="BioGRID" id="850491">
    <property type="interactions" value="8"/>
</dbReference>
<dbReference type="FunCoup" id="P67553">
    <property type="interactions" value="10"/>
</dbReference>
<dbReference type="IntAct" id="P67553">
    <property type="interactions" value="8"/>
</dbReference>
<dbReference type="jPOST" id="P67553"/>
<dbReference type="PaxDb" id="511145-b1585"/>
<dbReference type="EnsemblBacteria" id="AAC74657">
    <property type="protein sequence ID" value="AAC74657"/>
    <property type="gene ID" value="b1585"/>
</dbReference>
<dbReference type="GeneID" id="946131"/>
<dbReference type="KEGG" id="ecj:JW5258"/>
<dbReference type="KEGG" id="eco:b1585"/>
<dbReference type="PATRIC" id="fig|511145.12.peg.1656"/>
<dbReference type="EchoBASE" id="EB3602"/>
<dbReference type="eggNOG" id="ENOG502Z8TA">
    <property type="taxonomic scope" value="Bacteria"/>
</dbReference>
<dbReference type="HOGENOM" id="CLU_1174761_0_0_6"/>
<dbReference type="InParanoid" id="P67553"/>
<dbReference type="OMA" id="WDTDDNG"/>
<dbReference type="OrthoDB" id="6622075at2"/>
<dbReference type="PhylomeDB" id="P67553"/>
<dbReference type="BioCyc" id="EcoCyc:G6843-MONOMER"/>
<dbReference type="PRO" id="PR:P67553"/>
<dbReference type="Proteomes" id="UP000000625">
    <property type="component" value="Chromosome"/>
</dbReference>
<dbReference type="GO" id="GO:0005886">
    <property type="term" value="C:plasma membrane"/>
    <property type="evidence" value="ECO:0007669"/>
    <property type="project" value="UniProtKB-SubCell"/>
</dbReference>
<dbReference type="HAMAP" id="MF_01065">
    <property type="entry name" value="UPF0257"/>
    <property type="match status" value="1"/>
</dbReference>
<dbReference type="InterPro" id="IPR010646">
    <property type="entry name" value="UPF0257"/>
</dbReference>
<dbReference type="NCBIfam" id="NF002798">
    <property type="entry name" value="PRK02939.1"/>
    <property type="match status" value="1"/>
</dbReference>
<dbReference type="Pfam" id="PF06788">
    <property type="entry name" value="UPF0257"/>
    <property type="match status" value="1"/>
</dbReference>
<dbReference type="PROSITE" id="PS51257">
    <property type="entry name" value="PROKAR_LIPOPROTEIN"/>
    <property type="match status" value="1"/>
</dbReference>
<feature type="signal peptide" evidence="1">
    <location>
        <begin position="1"/>
        <end position="16"/>
    </location>
</feature>
<feature type="chain" id="PRO_0000036261" description="UPF0257 lipoprotein YnfC">
    <location>
        <begin position="17"/>
        <end position="236"/>
    </location>
</feature>
<feature type="lipid moiety-binding region" description="N-palmitoyl cysteine" evidence="1">
    <location>
        <position position="17"/>
    </location>
</feature>
<feature type="lipid moiety-binding region" description="S-diacylglycerol cysteine" evidence="1">
    <location>
        <position position="17"/>
    </location>
</feature>
<keyword id="KW-1003">Cell membrane</keyword>
<keyword id="KW-0449">Lipoprotein</keyword>
<keyword id="KW-0472">Membrane</keyword>
<keyword id="KW-0564">Palmitate</keyword>
<keyword id="KW-1185">Reference proteome</keyword>
<keyword id="KW-0732">Signal</keyword>
<name>YNFC_ECOLI</name>
<evidence type="ECO:0000255" key="1"/>
<evidence type="ECO:0000305" key="2"/>
<accession>P67553</accession>
<accession>P76171</accession>
<accession>Q2MB78</accession>
<reference key="1">
    <citation type="journal article" date="1997" name="Science">
        <title>The complete genome sequence of Escherichia coli K-12.</title>
        <authorList>
            <person name="Blattner F.R."/>
            <person name="Plunkett G. III"/>
            <person name="Bloch C.A."/>
            <person name="Perna N.T."/>
            <person name="Burland V."/>
            <person name="Riley M."/>
            <person name="Collado-Vides J."/>
            <person name="Glasner J.D."/>
            <person name="Rode C.K."/>
            <person name="Mayhew G.F."/>
            <person name="Gregor J."/>
            <person name="Davis N.W."/>
            <person name="Kirkpatrick H.A."/>
            <person name="Goeden M.A."/>
            <person name="Rose D.J."/>
            <person name="Mau B."/>
            <person name="Shao Y."/>
        </authorList>
    </citation>
    <scope>NUCLEOTIDE SEQUENCE [LARGE SCALE GENOMIC DNA]</scope>
    <source>
        <strain>K12 / MG1655 / ATCC 47076</strain>
    </source>
</reference>
<reference key="2">
    <citation type="journal article" date="2006" name="Mol. Syst. Biol.">
        <title>Highly accurate genome sequences of Escherichia coli K-12 strains MG1655 and W3110.</title>
        <authorList>
            <person name="Hayashi K."/>
            <person name="Morooka N."/>
            <person name="Yamamoto Y."/>
            <person name="Fujita K."/>
            <person name="Isono K."/>
            <person name="Choi S."/>
            <person name="Ohtsubo E."/>
            <person name="Baba T."/>
            <person name="Wanner B.L."/>
            <person name="Mori H."/>
            <person name="Horiuchi T."/>
        </authorList>
    </citation>
    <scope>NUCLEOTIDE SEQUENCE [LARGE SCALE GENOMIC DNA]</scope>
    <source>
        <strain>K12 / W3110 / ATCC 27325 / DSM 5911</strain>
    </source>
</reference>
<proteinExistence type="inferred from homology"/>
<comment type="subcellular location">
    <subcellularLocation>
        <location evidence="2">Cell membrane</location>
        <topology evidence="2">Lipid-anchor</topology>
    </subcellularLocation>
</comment>
<comment type="similarity">
    <text evidence="2">Belongs to the UPF0257 family.</text>
</comment>